<feature type="chain" id="PRO_1000074619" description="Cysteine--tRNA ligase">
    <location>
        <begin position="1"/>
        <end position="470"/>
    </location>
</feature>
<feature type="short sequence motif" description="'HIGH' region">
    <location>
        <begin position="30"/>
        <end position="40"/>
    </location>
</feature>
<feature type="short sequence motif" description="'KMSKS' region">
    <location>
        <begin position="271"/>
        <end position="275"/>
    </location>
</feature>
<feature type="binding site" evidence="1">
    <location>
        <position position="28"/>
    </location>
    <ligand>
        <name>Zn(2+)</name>
        <dbReference type="ChEBI" id="CHEBI:29105"/>
    </ligand>
</feature>
<feature type="binding site" evidence="1">
    <location>
        <position position="212"/>
    </location>
    <ligand>
        <name>Zn(2+)</name>
        <dbReference type="ChEBI" id="CHEBI:29105"/>
    </ligand>
</feature>
<feature type="binding site" evidence="1">
    <location>
        <position position="237"/>
    </location>
    <ligand>
        <name>Zn(2+)</name>
        <dbReference type="ChEBI" id="CHEBI:29105"/>
    </ligand>
</feature>
<feature type="binding site" evidence="1">
    <location>
        <position position="241"/>
    </location>
    <ligand>
        <name>Zn(2+)</name>
        <dbReference type="ChEBI" id="CHEBI:29105"/>
    </ligand>
</feature>
<feature type="binding site" evidence="1">
    <location>
        <position position="274"/>
    </location>
    <ligand>
        <name>ATP</name>
        <dbReference type="ChEBI" id="CHEBI:30616"/>
    </ligand>
</feature>
<gene>
    <name evidence="1" type="primary">cysS</name>
    <name type="ordered locus">LSL_1247</name>
</gene>
<sequence>MLQLYNTLTNQKEKFEPLNPGKVTMYVCGPTVYNYIHIGNARSAVAFDTIRRYLEYRGFEVNYVSNFTDVDDKIIKASQEMNLSVKEITEKFINAFYEDTSALNVKKATLNPRVMDNMDDIIKFIEVLVQKGYAYESAGDVYYKTRKFKDYGKLSGQLIDDLEQGASSRVDDIDQDKKQDPLDFALWKKVKQGEISWNSPWGQGRPGWHIECSVMSTKYLGDTIDIHAGGQDLEFPHHENEIAQSEAKTGKKFARYWLHNGFVTIGEEDQKMSKSLGNFVTVHDLLKKVNPQVIRFFMSTTQYRRPIRYSSANLNEAKVNLNKLQTAYENLSYRLKDSVEGNDKEVEVNFANLEKDFVKVMDDDFNVQNGISVVYEMAKQLNVYSEKEKVYTDTINNLINTYKKVVEIFGISFSEEKELLDDTIEQLIQERNEARKNKNFKRSDEIRDLLKEQGIILEDTAQGTRWKRND</sequence>
<keyword id="KW-0030">Aminoacyl-tRNA synthetase</keyword>
<keyword id="KW-0067">ATP-binding</keyword>
<keyword id="KW-0963">Cytoplasm</keyword>
<keyword id="KW-0436">Ligase</keyword>
<keyword id="KW-0479">Metal-binding</keyword>
<keyword id="KW-0547">Nucleotide-binding</keyword>
<keyword id="KW-0648">Protein biosynthesis</keyword>
<keyword id="KW-1185">Reference proteome</keyword>
<keyword id="KW-0862">Zinc</keyword>
<proteinExistence type="inferred from homology"/>
<name>SYC_LIGS1</name>
<organism>
    <name type="scientific">Ligilactobacillus salivarius (strain UCC118)</name>
    <name type="common">Lactobacillus salivarius</name>
    <dbReference type="NCBI Taxonomy" id="362948"/>
    <lineage>
        <taxon>Bacteria</taxon>
        <taxon>Bacillati</taxon>
        <taxon>Bacillota</taxon>
        <taxon>Bacilli</taxon>
        <taxon>Lactobacillales</taxon>
        <taxon>Lactobacillaceae</taxon>
        <taxon>Ligilactobacillus</taxon>
    </lineage>
</organism>
<comment type="catalytic activity">
    <reaction evidence="1">
        <text>tRNA(Cys) + L-cysteine + ATP = L-cysteinyl-tRNA(Cys) + AMP + diphosphate</text>
        <dbReference type="Rhea" id="RHEA:17773"/>
        <dbReference type="Rhea" id="RHEA-COMP:9661"/>
        <dbReference type="Rhea" id="RHEA-COMP:9679"/>
        <dbReference type="ChEBI" id="CHEBI:30616"/>
        <dbReference type="ChEBI" id="CHEBI:33019"/>
        <dbReference type="ChEBI" id="CHEBI:35235"/>
        <dbReference type="ChEBI" id="CHEBI:78442"/>
        <dbReference type="ChEBI" id="CHEBI:78517"/>
        <dbReference type="ChEBI" id="CHEBI:456215"/>
        <dbReference type="EC" id="6.1.1.16"/>
    </reaction>
</comment>
<comment type="cofactor">
    <cofactor evidence="1">
        <name>Zn(2+)</name>
        <dbReference type="ChEBI" id="CHEBI:29105"/>
    </cofactor>
    <text evidence="1">Binds 1 zinc ion per subunit.</text>
</comment>
<comment type="subunit">
    <text evidence="1">Monomer.</text>
</comment>
<comment type="subcellular location">
    <subcellularLocation>
        <location evidence="1">Cytoplasm</location>
    </subcellularLocation>
</comment>
<comment type="similarity">
    <text evidence="1">Belongs to the class-I aminoacyl-tRNA synthetase family.</text>
</comment>
<accession>Q1WSS5</accession>
<reference key="1">
    <citation type="journal article" date="2006" name="Proc. Natl. Acad. Sci. U.S.A.">
        <title>Multireplicon genome architecture of Lactobacillus salivarius.</title>
        <authorList>
            <person name="Claesson M.J."/>
            <person name="Li Y."/>
            <person name="Leahy S."/>
            <person name="Canchaya C."/>
            <person name="van Pijkeren J.P."/>
            <person name="Cerdeno-Tarraga A.M."/>
            <person name="Parkhill J."/>
            <person name="Flynn S."/>
            <person name="O'Sullivan G.C."/>
            <person name="Collins J.K."/>
            <person name="Higgins D."/>
            <person name="Shanahan F."/>
            <person name="Fitzgerald G.F."/>
            <person name="van Sinderen D."/>
            <person name="O'Toole P.W."/>
        </authorList>
    </citation>
    <scope>NUCLEOTIDE SEQUENCE [LARGE SCALE GENOMIC DNA]</scope>
    <source>
        <strain>UCC118</strain>
    </source>
</reference>
<evidence type="ECO:0000255" key="1">
    <source>
        <dbReference type="HAMAP-Rule" id="MF_00041"/>
    </source>
</evidence>
<dbReference type="EC" id="6.1.1.16" evidence="1"/>
<dbReference type="EMBL" id="CP000233">
    <property type="protein sequence ID" value="ABE00054.1"/>
    <property type="molecule type" value="Genomic_DNA"/>
</dbReference>
<dbReference type="RefSeq" id="WP_011476233.1">
    <property type="nucleotide sequence ID" value="NC_007929.1"/>
</dbReference>
<dbReference type="RefSeq" id="YP_536137.1">
    <property type="nucleotide sequence ID" value="NC_007929.1"/>
</dbReference>
<dbReference type="SMR" id="Q1WSS5"/>
<dbReference type="STRING" id="362948.LSL_1247"/>
<dbReference type="KEGG" id="lsl:LSL_1247"/>
<dbReference type="PATRIC" id="fig|362948.14.peg.1321"/>
<dbReference type="HOGENOM" id="CLU_013528_0_1_9"/>
<dbReference type="OrthoDB" id="9815130at2"/>
<dbReference type="Proteomes" id="UP000006559">
    <property type="component" value="Chromosome"/>
</dbReference>
<dbReference type="GO" id="GO:0005829">
    <property type="term" value="C:cytosol"/>
    <property type="evidence" value="ECO:0007669"/>
    <property type="project" value="TreeGrafter"/>
</dbReference>
<dbReference type="GO" id="GO:0005524">
    <property type="term" value="F:ATP binding"/>
    <property type="evidence" value="ECO:0007669"/>
    <property type="project" value="UniProtKB-UniRule"/>
</dbReference>
<dbReference type="GO" id="GO:0004817">
    <property type="term" value="F:cysteine-tRNA ligase activity"/>
    <property type="evidence" value="ECO:0007669"/>
    <property type="project" value="UniProtKB-UniRule"/>
</dbReference>
<dbReference type="GO" id="GO:0008270">
    <property type="term" value="F:zinc ion binding"/>
    <property type="evidence" value="ECO:0007669"/>
    <property type="project" value="UniProtKB-UniRule"/>
</dbReference>
<dbReference type="GO" id="GO:0006423">
    <property type="term" value="P:cysteinyl-tRNA aminoacylation"/>
    <property type="evidence" value="ECO:0007669"/>
    <property type="project" value="UniProtKB-UniRule"/>
</dbReference>
<dbReference type="CDD" id="cd00672">
    <property type="entry name" value="CysRS_core"/>
    <property type="match status" value="1"/>
</dbReference>
<dbReference type="FunFam" id="3.40.50.620:FF:000009">
    <property type="entry name" value="Cysteine--tRNA ligase"/>
    <property type="match status" value="1"/>
</dbReference>
<dbReference type="Gene3D" id="1.20.120.1910">
    <property type="entry name" value="Cysteine-tRNA ligase, C-terminal anti-codon recognition domain"/>
    <property type="match status" value="1"/>
</dbReference>
<dbReference type="Gene3D" id="3.40.50.620">
    <property type="entry name" value="HUPs"/>
    <property type="match status" value="1"/>
</dbReference>
<dbReference type="HAMAP" id="MF_00041">
    <property type="entry name" value="Cys_tRNA_synth"/>
    <property type="match status" value="1"/>
</dbReference>
<dbReference type="InterPro" id="IPR015803">
    <property type="entry name" value="Cys-tRNA-ligase"/>
</dbReference>
<dbReference type="InterPro" id="IPR015273">
    <property type="entry name" value="Cys-tRNA-synt_Ia_DALR"/>
</dbReference>
<dbReference type="InterPro" id="IPR024909">
    <property type="entry name" value="Cys-tRNA/MSH_ligase"/>
</dbReference>
<dbReference type="InterPro" id="IPR056411">
    <property type="entry name" value="CysS_C"/>
</dbReference>
<dbReference type="InterPro" id="IPR014729">
    <property type="entry name" value="Rossmann-like_a/b/a_fold"/>
</dbReference>
<dbReference type="InterPro" id="IPR032678">
    <property type="entry name" value="tRNA-synt_1_cat_dom"/>
</dbReference>
<dbReference type="InterPro" id="IPR009080">
    <property type="entry name" value="tRNAsynth_Ia_anticodon-bd"/>
</dbReference>
<dbReference type="NCBIfam" id="TIGR00435">
    <property type="entry name" value="cysS"/>
    <property type="match status" value="1"/>
</dbReference>
<dbReference type="PANTHER" id="PTHR10890:SF3">
    <property type="entry name" value="CYSTEINE--TRNA LIGASE, CYTOPLASMIC"/>
    <property type="match status" value="1"/>
</dbReference>
<dbReference type="PANTHER" id="PTHR10890">
    <property type="entry name" value="CYSTEINYL-TRNA SYNTHETASE"/>
    <property type="match status" value="1"/>
</dbReference>
<dbReference type="Pfam" id="PF23493">
    <property type="entry name" value="CysS_C"/>
    <property type="match status" value="1"/>
</dbReference>
<dbReference type="Pfam" id="PF09190">
    <property type="entry name" value="DALR_2"/>
    <property type="match status" value="1"/>
</dbReference>
<dbReference type="Pfam" id="PF01406">
    <property type="entry name" value="tRNA-synt_1e"/>
    <property type="match status" value="1"/>
</dbReference>
<dbReference type="PRINTS" id="PR00983">
    <property type="entry name" value="TRNASYNTHCYS"/>
</dbReference>
<dbReference type="SMART" id="SM00840">
    <property type="entry name" value="DALR_2"/>
    <property type="match status" value="1"/>
</dbReference>
<dbReference type="SUPFAM" id="SSF47323">
    <property type="entry name" value="Anticodon-binding domain of a subclass of class I aminoacyl-tRNA synthetases"/>
    <property type="match status" value="1"/>
</dbReference>
<dbReference type="SUPFAM" id="SSF52374">
    <property type="entry name" value="Nucleotidylyl transferase"/>
    <property type="match status" value="1"/>
</dbReference>
<protein>
    <recommendedName>
        <fullName evidence="1">Cysteine--tRNA ligase</fullName>
        <ecNumber evidence="1">6.1.1.16</ecNumber>
    </recommendedName>
    <alternativeName>
        <fullName evidence="1">Cysteinyl-tRNA synthetase</fullName>
        <shortName evidence="1">CysRS</shortName>
    </alternativeName>
</protein>